<sequence length="307" mass="34706">MSENQQALNHVVSMEDLTVDQVMKLIKRGIEFKNGAQLPYEDHPIVSNLFFEDSTRTHKSFEVAEIKLGLERLDFDVKTSSVNKGETLYDTILTLSALGVDVCVIRHPEVDYYRELIASPTITTSIINGGDGSGQHPSQSLLDLMTIYEEFGHFEGLKVAIAGDLDHSRVAKSNMQILKRLGSELFFAGPEEWRSQEFADYGQFVTIDEIIDQVDVMMFLRVQHERHDSGAVFSKEDYHAQHGLTQERYDRLKETAILMHPAPINRDVEIADHLVEAPKSRIVQQMTNGVFVRMAILESVLASRNAN</sequence>
<proteinExistence type="inferred from homology"/>
<organism>
    <name type="scientific">Streptococcus pneumoniae (strain P1031)</name>
    <dbReference type="NCBI Taxonomy" id="488223"/>
    <lineage>
        <taxon>Bacteria</taxon>
        <taxon>Bacillati</taxon>
        <taxon>Bacillota</taxon>
        <taxon>Bacilli</taxon>
        <taxon>Lactobacillales</taxon>
        <taxon>Streptococcaceae</taxon>
        <taxon>Streptococcus</taxon>
    </lineage>
</organism>
<protein>
    <recommendedName>
        <fullName evidence="1">Aspartate carbamoyltransferase catalytic subunit</fullName>
        <ecNumber evidence="1">2.1.3.2</ecNumber>
    </recommendedName>
    <alternativeName>
        <fullName evidence="1">Aspartate transcarbamylase</fullName>
        <shortName evidence="1">ATCase</shortName>
    </alternativeName>
</protein>
<name>PYRB_STRZP</name>
<reference key="1">
    <citation type="journal article" date="2010" name="Genome Biol.">
        <title>Structure and dynamics of the pan-genome of Streptococcus pneumoniae and closely related species.</title>
        <authorList>
            <person name="Donati C."/>
            <person name="Hiller N.L."/>
            <person name="Tettelin H."/>
            <person name="Muzzi A."/>
            <person name="Croucher N.J."/>
            <person name="Angiuoli S.V."/>
            <person name="Oggioni M."/>
            <person name="Dunning Hotopp J.C."/>
            <person name="Hu F.Z."/>
            <person name="Riley D.R."/>
            <person name="Covacci A."/>
            <person name="Mitchell T.J."/>
            <person name="Bentley S.D."/>
            <person name="Kilian M."/>
            <person name="Ehrlich G.D."/>
            <person name="Rappuoli R."/>
            <person name="Moxon E.R."/>
            <person name="Masignani V."/>
        </authorList>
    </citation>
    <scope>NUCLEOTIDE SEQUENCE [LARGE SCALE GENOMIC DNA]</scope>
    <source>
        <strain>P1031</strain>
    </source>
</reference>
<evidence type="ECO:0000255" key="1">
    <source>
        <dbReference type="HAMAP-Rule" id="MF_00001"/>
    </source>
</evidence>
<dbReference type="EC" id="2.1.3.2" evidence="1"/>
<dbReference type="EMBL" id="CP000920">
    <property type="protein sequence ID" value="ACO20232.1"/>
    <property type="molecule type" value="Genomic_DNA"/>
</dbReference>
<dbReference type="RefSeq" id="WP_001293845.1">
    <property type="nucleotide sequence ID" value="NC_012467.1"/>
</dbReference>
<dbReference type="SMR" id="C1CL11"/>
<dbReference type="KEGG" id="spp:SPP_1315"/>
<dbReference type="HOGENOM" id="CLU_043846_2_1_9"/>
<dbReference type="UniPathway" id="UPA00070">
    <property type="reaction ID" value="UER00116"/>
</dbReference>
<dbReference type="GO" id="GO:0005829">
    <property type="term" value="C:cytosol"/>
    <property type="evidence" value="ECO:0007669"/>
    <property type="project" value="TreeGrafter"/>
</dbReference>
<dbReference type="GO" id="GO:0016597">
    <property type="term" value="F:amino acid binding"/>
    <property type="evidence" value="ECO:0007669"/>
    <property type="project" value="InterPro"/>
</dbReference>
<dbReference type="GO" id="GO:0004070">
    <property type="term" value="F:aspartate carbamoyltransferase activity"/>
    <property type="evidence" value="ECO:0007669"/>
    <property type="project" value="UniProtKB-UniRule"/>
</dbReference>
<dbReference type="GO" id="GO:0006207">
    <property type="term" value="P:'de novo' pyrimidine nucleobase biosynthetic process"/>
    <property type="evidence" value="ECO:0007669"/>
    <property type="project" value="InterPro"/>
</dbReference>
<dbReference type="GO" id="GO:0044205">
    <property type="term" value="P:'de novo' UMP biosynthetic process"/>
    <property type="evidence" value="ECO:0007669"/>
    <property type="project" value="UniProtKB-UniRule"/>
</dbReference>
<dbReference type="GO" id="GO:0006520">
    <property type="term" value="P:amino acid metabolic process"/>
    <property type="evidence" value="ECO:0007669"/>
    <property type="project" value="InterPro"/>
</dbReference>
<dbReference type="FunFam" id="3.40.50.1370:FF:000011">
    <property type="entry name" value="Aspartate carbamoyltransferase"/>
    <property type="match status" value="1"/>
</dbReference>
<dbReference type="Gene3D" id="3.40.50.1370">
    <property type="entry name" value="Aspartate/ornithine carbamoyltransferase"/>
    <property type="match status" value="2"/>
</dbReference>
<dbReference type="HAMAP" id="MF_00001">
    <property type="entry name" value="Asp_carb_tr"/>
    <property type="match status" value="1"/>
</dbReference>
<dbReference type="InterPro" id="IPR006132">
    <property type="entry name" value="Asp/Orn_carbamoyltranf_P-bd"/>
</dbReference>
<dbReference type="InterPro" id="IPR006130">
    <property type="entry name" value="Asp/Orn_carbamoylTrfase"/>
</dbReference>
<dbReference type="InterPro" id="IPR036901">
    <property type="entry name" value="Asp/Orn_carbamoylTrfase_sf"/>
</dbReference>
<dbReference type="InterPro" id="IPR002082">
    <property type="entry name" value="Asp_carbamoyltransf"/>
</dbReference>
<dbReference type="InterPro" id="IPR006131">
    <property type="entry name" value="Asp_carbamoyltransf_Asp/Orn-bd"/>
</dbReference>
<dbReference type="NCBIfam" id="TIGR00670">
    <property type="entry name" value="asp_carb_tr"/>
    <property type="match status" value="1"/>
</dbReference>
<dbReference type="NCBIfam" id="NF002032">
    <property type="entry name" value="PRK00856.1"/>
    <property type="match status" value="1"/>
</dbReference>
<dbReference type="PANTHER" id="PTHR45753:SF6">
    <property type="entry name" value="ASPARTATE CARBAMOYLTRANSFERASE"/>
    <property type="match status" value="1"/>
</dbReference>
<dbReference type="PANTHER" id="PTHR45753">
    <property type="entry name" value="ORNITHINE CARBAMOYLTRANSFERASE, MITOCHONDRIAL"/>
    <property type="match status" value="1"/>
</dbReference>
<dbReference type="Pfam" id="PF00185">
    <property type="entry name" value="OTCace"/>
    <property type="match status" value="1"/>
</dbReference>
<dbReference type="Pfam" id="PF02729">
    <property type="entry name" value="OTCace_N"/>
    <property type="match status" value="1"/>
</dbReference>
<dbReference type="PRINTS" id="PR00100">
    <property type="entry name" value="AOTCASE"/>
</dbReference>
<dbReference type="PRINTS" id="PR00101">
    <property type="entry name" value="ATCASE"/>
</dbReference>
<dbReference type="SUPFAM" id="SSF53671">
    <property type="entry name" value="Aspartate/ornithine carbamoyltransferase"/>
    <property type="match status" value="1"/>
</dbReference>
<dbReference type="PROSITE" id="PS00097">
    <property type="entry name" value="CARBAMOYLTRANSFERASE"/>
    <property type="match status" value="1"/>
</dbReference>
<comment type="function">
    <text evidence="1">Catalyzes the condensation of carbamoyl phosphate and aspartate to form carbamoyl aspartate and inorganic phosphate, the committed step in the de novo pyrimidine nucleotide biosynthesis pathway.</text>
</comment>
<comment type="catalytic activity">
    <reaction evidence="1">
        <text>carbamoyl phosphate + L-aspartate = N-carbamoyl-L-aspartate + phosphate + H(+)</text>
        <dbReference type="Rhea" id="RHEA:20013"/>
        <dbReference type="ChEBI" id="CHEBI:15378"/>
        <dbReference type="ChEBI" id="CHEBI:29991"/>
        <dbReference type="ChEBI" id="CHEBI:32814"/>
        <dbReference type="ChEBI" id="CHEBI:43474"/>
        <dbReference type="ChEBI" id="CHEBI:58228"/>
        <dbReference type="EC" id="2.1.3.2"/>
    </reaction>
</comment>
<comment type="pathway">
    <text evidence="1">Pyrimidine metabolism; UMP biosynthesis via de novo pathway; (S)-dihydroorotate from bicarbonate: step 2/3.</text>
</comment>
<comment type="subunit">
    <text evidence="1">Heterododecamer (2C3:3R2) of six catalytic PyrB chains organized as two trimers (C3), and six regulatory PyrI chains organized as three dimers (R2).</text>
</comment>
<comment type="similarity">
    <text evidence="1">Belongs to the aspartate/ornithine carbamoyltransferase superfamily. ATCase family.</text>
</comment>
<accession>C1CL11</accession>
<keyword id="KW-0665">Pyrimidine biosynthesis</keyword>
<keyword id="KW-0808">Transferase</keyword>
<feature type="chain" id="PRO_1000191915" description="Aspartate carbamoyltransferase catalytic subunit">
    <location>
        <begin position="1"/>
        <end position="307"/>
    </location>
</feature>
<feature type="binding site" evidence="1">
    <location>
        <position position="56"/>
    </location>
    <ligand>
        <name>carbamoyl phosphate</name>
        <dbReference type="ChEBI" id="CHEBI:58228"/>
    </ligand>
</feature>
<feature type="binding site" evidence="1">
    <location>
        <position position="57"/>
    </location>
    <ligand>
        <name>carbamoyl phosphate</name>
        <dbReference type="ChEBI" id="CHEBI:58228"/>
    </ligand>
</feature>
<feature type="binding site" evidence="1">
    <location>
        <position position="84"/>
    </location>
    <ligand>
        <name>L-aspartate</name>
        <dbReference type="ChEBI" id="CHEBI:29991"/>
    </ligand>
</feature>
<feature type="binding site" evidence="1">
    <location>
        <position position="106"/>
    </location>
    <ligand>
        <name>carbamoyl phosphate</name>
        <dbReference type="ChEBI" id="CHEBI:58228"/>
    </ligand>
</feature>
<feature type="binding site" evidence="1">
    <location>
        <position position="136"/>
    </location>
    <ligand>
        <name>carbamoyl phosphate</name>
        <dbReference type="ChEBI" id="CHEBI:58228"/>
    </ligand>
</feature>
<feature type="binding site" evidence="1">
    <location>
        <position position="139"/>
    </location>
    <ligand>
        <name>carbamoyl phosphate</name>
        <dbReference type="ChEBI" id="CHEBI:58228"/>
    </ligand>
</feature>
<feature type="binding site" evidence="1">
    <location>
        <position position="169"/>
    </location>
    <ligand>
        <name>L-aspartate</name>
        <dbReference type="ChEBI" id="CHEBI:29991"/>
    </ligand>
</feature>
<feature type="binding site" evidence="1">
    <location>
        <position position="221"/>
    </location>
    <ligand>
        <name>L-aspartate</name>
        <dbReference type="ChEBI" id="CHEBI:29991"/>
    </ligand>
</feature>
<feature type="binding site" evidence="1">
    <location>
        <position position="262"/>
    </location>
    <ligand>
        <name>carbamoyl phosphate</name>
        <dbReference type="ChEBI" id="CHEBI:58228"/>
    </ligand>
</feature>
<feature type="binding site" evidence="1">
    <location>
        <position position="263"/>
    </location>
    <ligand>
        <name>carbamoyl phosphate</name>
        <dbReference type="ChEBI" id="CHEBI:58228"/>
    </ligand>
</feature>
<gene>
    <name evidence="1" type="primary">pyrB</name>
    <name type="ordered locus">SPP_1315</name>
</gene>